<reference key="1">
    <citation type="journal article" date="2009" name="Appl. Environ. Microbiol.">
        <title>Three genomes from the phylum Acidobacteria provide insight into the lifestyles of these microorganisms in soils.</title>
        <authorList>
            <person name="Ward N.L."/>
            <person name="Challacombe J.F."/>
            <person name="Janssen P.H."/>
            <person name="Henrissat B."/>
            <person name="Coutinho P.M."/>
            <person name="Wu M."/>
            <person name="Xie G."/>
            <person name="Haft D.H."/>
            <person name="Sait M."/>
            <person name="Badger J."/>
            <person name="Barabote R.D."/>
            <person name="Bradley B."/>
            <person name="Brettin T.S."/>
            <person name="Brinkac L.M."/>
            <person name="Bruce D."/>
            <person name="Creasy T."/>
            <person name="Daugherty S.C."/>
            <person name="Davidsen T.M."/>
            <person name="DeBoy R.T."/>
            <person name="Detter J.C."/>
            <person name="Dodson R.J."/>
            <person name="Durkin A.S."/>
            <person name="Ganapathy A."/>
            <person name="Gwinn-Giglio M."/>
            <person name="Han C.S."/>
            <person name="Khouri H."/>
            <person name="Kiss H."/>
            <person name="Kothari S.P."/>
            <person name="Madupu R."/>
            <person name="Nelson K.E."/>
            <person name="Nelson W.C."/>
            <person name="Paulsen I."/>
            <person name="Penn K."/>
            <person name="Ren Q."/>
            <person name="Rosovitz M.J."/>
            <person name="Selengut J.D."/>
            <person name="Shrivastava S."/>
            <person name="Sullivan S.A."/>
            <person name="Tapia R."/>
            <person name="Thompson L.S."/>
            <person name="Watkins K.L."/>
            <person name="Yang Q."/>
            <person name="Yu C."/>
            <person name="Zafar N."/>
            <person name="Zhou L."/>
            <person name="Kuske C.R."/>
        </authorList>
    </citation>
    <scope>NUCLEOTIDE SEQUENCE [LARGE SCALE GENOMIC DNA]</scope>
    <source>
        <strain>Ellin345</strain>
    </source>
</reference>
<accession>Q1IJ06</accession>
<protein>
    <recommendedName>
        <fullName evidence="1">Large ribosomal subunit protein bL32</fullName>
    </recommendedName>
    <alternativeName>
        <fullName evidence="3">50S ribosomal protein L32</fullName>
    </alternativeName>
</protein>
<gene>
    <name evidence="1" type="primary">rpmF</name>
    <name type="ordered locus">Acid345_4144</name>
</gene>
<evidence type="ECO:0000255" key="1">
    <source>
        <dbReference type="HAMAP-Rule" id="MF_00340"/>
    </source>
</evidence>
<evidence type="ECO:0000256" key="2">
    <source>
        <dbReference type="SAM" id="MobiDB-lite"/>
    </source>
</evidence>
<evidence type="ECO:0000305" key="3"/>
<feature type="chain" id="PRO_0000296408" description="Large ribosomal subunit protein bL32">
    <location>
        <begin position="1"/>
        <end position="62"/>
    </location>
</feature>
<feature type="region of interest" description="Disordered" evidence="2">
    <location>
        <begin position="1"/>
        <end position="23"/>
    </location>
</feature>
<feature type="compositionally biased region" description="Basic residues" evidence="2">
    <location>
        <begin position="1"/>
        <end position="19"/>
    </location>
</feature>
<dbReference type="EMBL" id="CP000360">
    <property type="protein sequence ID" value="ABF43144.1"/>
    <property type="molecule type" value="Genomic_DNA"/>
</dbReference>
<dbReference type="RefSeq" id="WP_011524943.1">
    <property type="nucleotide sequence ID" value="NC_008009.1"/>
</dbReference>
<dbReference type="SMR" id="Q1IJ06"/>
<dbReference type="STRING" id="204669.Acid345_4144"/>
<dbReference type="EnsemblBacteria" id="ABF43144">
    <property type="protein sequence ID" value="ABF43144"/>
    <property type="gene ID" value="Acid345_4144"/>
</dbReference>
<dbReference type="KEGG" id="aba:Acid345_4144"/>
<dbReference type="eggNOG" id="COG0333">
    <property type="taxonomic scope" value="Bacteria"/>
</dbReference>
<dbReference type="HOGENOM" id="CLU_129084_1_3_0"/>
<dbReference type="OrthoDB" id="9812874at2"/>
<dbReference type="Proteomes" id="UP000002432">
    <property type="component" value="Chromosome"/>
</dbReference>
<dbReference type="GO" id="GO:0015934">
    <property type="term" value="C:large ribosomal subunit"/>
    <property type="evidence" value="ECO:0007669"/>
    <property type="project" value="InterPro"/>
</dbReference>
<dbReference type="GO" id="GO:0003735">
    <property type="term" value="F:structural constituent of ribosome"/>
    <property type="evidence" value="ECO:0007669"/>
    <property type="project" value="InterPro"/>
</dbReference>
<dbReference type="GO" id="GO:0006412">
    <property type="term" value="P:translation"/>
    <property type="evidence" value="ECO:0007669"/>
    <property type="project" value="UniProtKB-UniRule"/>
</dbReference>
<dbReference type="HAMAP" id="MF_00340">
    <property type="entry name" value="Ribosomal_bL32"/>
    <property type="match status" value="1"/>
</dbReference>
<dbReference type="InterPro" id="IPR002677">
    <property type="entry name" value="Ribosomal_bL32"/>
</dbReference>
<dbReference type="InterPro" id="IPR044957">
    <property type="entry name" value="Ribosomal_bL32_bact"/>
</dbReference>
<dbReference type="InterPro" id="IPR011332">
    <property type="entry name" value="Ribosomal_zn-bd"/>
</dbReference>
<dbReference type="NCBIfam" id="TIGR01031">
    <property type="entry name" value="rpmF_bact"/>
    <property type="match status" value="1"/>
</dbReference>
<dbReference type="PANTHER" id="PTHR35534">
    <property type="entry name" value="50S RIBOSOMAL PROTEIN L32"/>
    <property type="match status" value="1"/>
</dbReference>
<dbReference type="PANTHER" id="PTHR35534:SF1">
    <property type="entry name" value="LARGE RIBOSOMAL SUBUNIT PROTEIN BL32"/>
    <property type="match status" value="1"/>
</dbReference>
<dbReference type="Pfam" id="PF01783">
    <property type="entry name" value="Ribosomal_L32p"/>
    <property type="match status" value="1"/>
</dbReference>
<dbReference type="SUPFAM" id="SSF57829">
    <property type="entry name" value="Zn-binding ribosomal proteins"/>
    <property type="match status" value="1"/>
</dbReference>
<comment type="similarity">
    <text evidence="1">Belongs to the bacterial ribosomal protein bL32 family.</text>
</comment>
<keyword id="KW-1185">Reference proteome</keyword>
<keyword id="KW-0687">Ribonucleoprotein</keyword>
<keyword id="KW-0689">Ribosomal protein</keyword>
<organism>
    <name type="scientific">Koribacter versatilis (strain Ellin345)</name>
    <dbReference type="NCBI Taxonomy" id="204669"/>
    <lineage>
        <taxon>Bacteria</taxon>
        <taxon>Pseudomonadati</taxon>
        <taxon>Acidobacteriota</taxon>
        <taxon>Terriglobia</taxon>
        <taxon>Terriglobales</taxon>
        <taxon>Candidatus Korobacteraceae</taxon>
        <taxon>Candidatus Korobacter</taxon>
    </lineage>
</organism>
<name>RL32_KORVE</name>
<proteinExistence type="inferred from homology"/>
<sequence>MPNPKRRHSKARTGNRRAHDHLSAHSLSECPNCHWKKMPHRACAKCGYYKGREVLEVEDNKK</sequence>